<proteinExistence type="inferred from homology"/>
<protein>
    <recommendedName>
        <fullName evidence="1">Co-chaperonin GroES</fullName>
    </recommendedName>
    <alternativeName>
        <fullName evidence="1">10 kDa chaperonin</fullName>
    </alternativeName>
    <alternativeName>
        <fullName evidence="1">Chaperonin-10</fullName>
        <shortName evidence="1">Cpn10</shortName>
    </alternativeName>
</protein>
<dbReference type="EMBL" id="AP009493">
    <property type="protein sequence ID" value="BAG19599.1"/>
    <property type="molecule type" value="Genomic_DNA"/>
</dbReference>
<dbReference type="RefSeq" id="WP_003966899.1">
    <property type="nucleotide sequence ID" value="NC_010572.1"/>
</dbReference>
<dbReference type="SMR" id="B1W3U3"/>
<dbReference type="GeneID" id="97760438"/>
<dbReference type="KEGG" id="sgr:SGR_2770"/>
<dbReference type="eggNOG" id="COG0234">
    <property type="taxonomic scope" value="Bacteria"/>
</dbReference>
<dbReference type="HOGENOM" id="CLU_132825_2_0_11"/>
<dbReference type="Proteomes" id="UP000001685">
    <property type="component" value="Chromosome"/>
</dbReference>
<dbReference type="GO" id="GO:0005737">
    <property type="term" value="C:cytoplasm"/>
    <property type="evidence" value="ECO:0007669"/>
    <property type="project" value="UniProtKB-SubCell"/>
</dbReference>
<dbReference type="GO" id="GO:0005524">
    <property type="term" value="F:ATP binding"/>
    <property type="evidence" value="ECO:0007669"/>
    <property type="project" value="InterPro"/>
</dbReference>
<dbReference type="GO" id="GO:0046872">
    <property type="term" value="F:metal ion binding"/>
    <property type="evidence" value="ECO:0007669"/>
    <property type="project" value="TreeGrafter"/>
</dbReference>
<dbReference type="GO" id="GO:0044183">
    <property type="term" value="F:protein folding chaperone"/>
    <property type="evidence" value="ECO:0007669"/>
    <property type="project" value="InterPro"/>
</dbReference>
<dbReference type="GO" id="GO:0051087">
    <property type="term" value="F:protein-folding chaperone binding"/>
    <property type="evidence" value="ECO:0007669"/>
    <property type="project" value="TreeGrafter"/>
</dbReference>
<dbReference type="GO" id="GO:0051082">
    <property type="term" value="F:unfolded protein binding"/>
    <property type="evidence" value="ECO:0007669"/>
    <property type="project" value="TreeGrafter"/>
</dbReference>
<dbReference type="GO" id="GO:0051085">
    <property type="term" value="P:chaperone cofactor-dependent protein refolding"/>
    <property type="evidence" value="ECO:0007669"/>
    <property type="project" value="TreeGrafter"/>
</dbReference>
<dbReference type="CDD" id="cd00320">
    <property type="entry name" value="cpn10"/>
    <property type="match status" value="1"/>
</dbReference>
<dbReference type="FunFam" id="2.30.33.40:FF:000001">
    <property type="entry name" value="10 kDa chaperonin"/>
    <property type="match status" value="1"/>
</dbReference>
<dbReference type="Gene3D" id="2.30.33.40">
    <property type="entry name" value="GroES chaperonin"/>
    <property type="match status" value="1"/>
</dbReference>
<dbReference type="HAMAP" id="MF_00580">
    <property type="entry name" value="CH10"/>
    <property type="match status" value="1"/>
</dbReference>
<dbReference type="InterPro" id="IPR020818">
    <property type="entry name" value="Chaperonin_GroES"/>
</dbReference>
<dbReference type="InterPro" id="IPR037124">
    <property type="entry name" value="Chaperonin_GroES_sf"/>
</dbReference>
<dbReference type="InterPro" id="IPR018369">
    <property type="entry name" value="Chaprnonin_Cpn10_CS"/>
</dbReference>
<dbReference type="InterPro" id="IPR011032">
    <property type="entry name" value="GroES-like_sf"/>
</dbReference>
<dbReference type="NCBIfam" id="NF001530">
    <property type="entry name" value="PRK00364.1-6"/>
    <property type="match status" value="1"/>
</dbReference>
<dbReference type="NCBIfam" id="NF001531">
    <property type="entry name" value="PRK00364.2-2"/>
    <property type="match status" value="1"/>
</dbReference>
<dbReference type="NCBIfam" id="NF001533">
    <property type="entry name" value="PRK00364.2-4"/>
    <property type="match status" value="1"/>
</dbReference>
<dbReference type="NCBIfam" id="NF001534">
    <property type="entry name" value="PRK00364.2-5"/>
    <property type="match status" value="1"/>
</dbReference>
<dbReference type="PANTHER" id="PTHR10772">
    <property type="entry name" value="10 KDA HEAT SHOCK PROTEIN"/>
    <property type="match status" value="1"/>
</dbReference>
<dbReference type="PANTHER" id="PTHR10772:SF58">
    <property type="entry name" value="CO-CHAPERONIN GROES"/>
    <property type="match status" value="1"/>
</dbReference>
<dbReference type="Pfam" id="PF00166">
    <property type="entry name" value="Cpn10"/>
    <property type="match status" value="1"/>
</dbReference>
<dbReference type="PRINTS" id="PR00297">
    <property type="entry name" value="CHAPERONIN10"/>
</dbReference>
<dbReference type="SMART" id="SM00883">
    <property type="entry name" value="Cpn10"/>
    <property type="match status" value="1"/>
</dbReference>
<dbReference type="SUPFAM" id="SSF50129">
    <property type="entry name" value="GroES-like"/>
    <property type="match status" value="1"/>
</dbReference>
<dbReference type="PROSITE" id="PS00681">
    <property type="entry name" value="CHAPERONINS_CPN10"/>
    <property type="match status" value="1"/>
</dbReference>
<accession>B1W3U3</accession>
<sequence length="102" mass="10990">MSTTSSKVAIKPLEDRIVVQPLDAEQTTASGLVIPDTAKEKPQEGVVLAVGPGRFENGERLPLDVKTGDVVLYSKYGGTEVKYNGEEYLVLSARDVLAIVEK</sequence>
<keyword id="KW-0143">Chaperone</keyword>
<keyword id="KW-0963">Cytoplasm</keyword>
<feature type="chain" id="PRO_1000129709" description="Co-chaperonin GroES">
    <location>
        <begin position="1"/>
        <end position="102"/>
    </location>
</feature>
<organism>
    <name type="scientific">Streptomyces griseus subsp. griseus (strain JCM 4626 / CBS 651.72 / NBRC 13350 / KCC S-0626 / ISP 5235)</name>
    <dbReference type="NCBI Taxonomy" id="455632"/>
    <lineage>
        <taxon>Bacteria</taxon>
        <taxon>Bacillati</taxon>
        <taxon>Actinomycetota</taxon>
        <taxon>Actinomycetes</taxon>
        <taxon>Kitasatosporales</taxon>
        <taxon>Streptomycetaceae</taxon>
        <taxon>Streptomyces</taxon>
    </lineage>
</organism>
<gene>
    <name evidence="1" type="primary">groES</name>
    <name evidence="1" type="synonym">groS</name>
    <name type="ordered locus">SGR_2770</name>
</gene>
<name>CH10_STRGG</name>
<reference key="1">
    <citation type="journal article" date="2008" name="J. Bacteriol.">
        <title>Genome sequence of the streptomycin-producing microorganism Streptomyces griseus IFO 13350.</title>
        <authorList>
            <person name="Ohnishi Y."/>
            <person name="Ishikawa J."/>
            <person name="Hara H."/>
            <person name="Suzuki H."/>
            <person name="Ikenoya M."/>
            <person name="Ikeda H."/>
            <person name="Yamashita A."/>
            <person name="Hattori M."/>
            <person name="Horinouchi S."/>
        </authorList>
    </citation>
    <scope>NUCLEOTIDE SEQUENCE [LARGE SCALE GENOMIC DNA]</scope>
    <source>
        <strain>JCM 4626 / CBS 651.72 / NBRC 13350 / KCC S-0626 / ISP 5235</strain>
    </source>
</reference>
<comment type="function">
    <text evidence="1">Together with the chaperonin GroEL, plays an essential role in assisting protein folding. The GroEL-GroES system forms a nano-cage that allows encapsulation of the non-native substrate proteins and provides a physical environment optimized to promote and accelerate protein folding. GroES binds to the apical surface of the GroEL ring, thereby capping the opening of the GroEL channel.</text>
</comment>
<comment type="subunit">
    <text evidence="1">Heptamer of 7 subunits arranged in a ring. Interacts with the chaperonin GroEL.</text>
</comment>
<comment type="subcellular location">
    <subcellularLocation>
        <location evidence="1">Cytoplasm</location>
    </subcellularLocation>
</comment>
<comment type="similarity">
    <text evidence="1">Belongs to the GroES chaperonin family.</text>
</comment>
<evidence type="ECO:0000255" key="1">
    <source>
        <dbReference type="HAMAP-Rule" id="MF_00580"/>
    </source>
</evidence>